<name>ATP6_HELAH</name>
<organism>
    <name type="scientific">Helicobacter acinonychis (strain Sheeba)</name>
    <dbReference type="NCBI Taxonomy" id="382638"/>
    <lineage>
        <taxon>Bacteria</taxon>
        <taxon>Pseudomonadati</taxon>
        <taxon>Campylobacterota</taxon>
        <taxon>Epsilonproteobacteria</taxon>
        <taxon>Campylobacterales</taxon>
        <taxon>Helicobacteraceae</taxon>
        <taxon>Helicobacter</taxon>
    </lineage>
</organism>
<evidence type="ECO:0000255" key="1">
    <source>
        <dbReference type="HAMAP-Rule" id="MF_01393"/>
    </source>
</evidence>
<keyword id="KW-0066">ATP synthesis</keyword>
<keyword id="KW-0997">Cell inner membrane</keyword>
<keyword id="KW-1003">Cell membrane</keyword>
<keyword id="KW-0138">CF(0)</keyword>
<keyword id="KW-0375">Hydrogen ion transport</keyword>
<keyword id="KW-0406">Ion transport</keyword>
<keyword id="KW-0472">Membrane</keyword>
<keyword id="KW-0812">Transmembrane</keyword>
<keyword id="KW-1133">Transmembrane helix</keyword>
<keyword id="KW-0813">Transport</keyword>
<feature type="chain" id="PRO_0000362328" description="ATP synthase subunit a">
    <location>
        <begin position="1"/>
        <end position="226"/>
    </location>
</feature>
<feature type="transmembrane region" description="Helical" evidence="1">
    <location>
        <begin position="18"/>
        <end position="38"/>
    </location>
</feature>
<feature type="transmembrane region" description="Helical" evidence="1">
    <location>
        <begin position="76"/>
        <end position="96"/>
    </location>
</feature>
<feature type="transmembrane region" description="Helical" evidence="1">
    <location>
        <begin position="105"/>
        <end position="125"/>
    </location>
</feature>
<feature type="transmembrane region" description="Helical" evidence="1">
    <location>
        <begin position="134"/>
        <end position="154"/>
    </location>
</feature>
<feature type="transmembrane region" description="Helical" evidence="1">
    <location>
        <begin position="179"/>
        <end position="199"/>
    </location>
</feature>
<feature type="transmembrane region" description="Helical" evidence="1">
    <location>
        <begin position="201"/>
        <end position="221"/>
    </location>
</feature>
<dbReference type="EMBL" id="AM260522">
    <property type="protein sequence ID" value="CAJ99952.1"/>
    <property type="molecule type" value="Genomic_DNA"/>
</dbReference>
<dbReference type="RefSeq" id="WP_011578059.1">
    <property type="nucleotide sequence ID" value="NC_008229.1"/>
</dbReference>
<dbReference type="SMR" id="Q17WM4"/>
<dbReference type="STRING" id="382638.Hac_1196"/>
<dbReference type="GeneID" id="31758544"/>
<dbReference type="KEGG" id="hac:Hac_1196"/>
<dbReference type="eggNOG" id="COG0356">
    <property type="taxonomic scope" value="Bacteria"/>
</dbReference>
<dbReference type="HOGENOM" id="CLU_041018_2_2_7"/>
<dbReference type="OrthoDB" id="9789241at2"/>
<dbReference type="BioCyc" id="HACI382638:HAC_RS05160-MONOMER"/>
<dbReference type="Proteomes" id="UP000000775">
    <property type="component" value="Chromosome"/>
</dbReference>
<dbReference type="GO" id="GO:0005886">
    <property type="term" value="C:plasma membrane"/>
    <property type="evidence" value="ECO:0007669"/>
    <property type="project" value="UniProtKB-SubCell"/>
</dbReference>
<dbReference type="GO" id="GO:0045259">
    <property type="term" value="C:proton-transporting ATP synthase complex"/>
    <property type="evidence" value="ECO:0007669"/>
    <property type="project" value="UniProtKB-KW"/>
</dbReference>
<dbReference type="GO" id="GO:0046933">
    <property type="term" value="F:proton-transporting ATP synthase activity, rotational mechanism"/>
    <property type="evidence" value="ECO:0007669"/>
    <property type="project" value="UniProtKB-UniRule"/>
</dbReference>
<dbReference type="GO" id="GO:0042777">
    <property type="term" value="P:proton motive force-driven plasma membrane ATP synthesis"/>
    <property type="evidence" value="ECO:0007669"/>
    <property type="project" value="TreeGrafter"/>
</dbReference>
<dbReference type="CDD" id="cd00310">
    <property type="entry name" value="ATP-synt_Fo_a_6"/>
    <property type="match status" value="1"/>
</dbReference>
<dbReference type="FunFam" id="1.20.120.220:FF:000006">
    <property type="entry name" value="ATP synthase subunit a"/>
    <property type="match status" value="1"/>
</dbReference>
<dbReference type="Gene3D" id="1.20.120.220">
    <property type="entry name" value="ATP synthase, F0 complex, subunit A"/>
    <property type="match status" value="1"/>
</dbReference>
<dbReference type="HAMAP" id="MF_01393">
    <property type="entry name" value="ATP_synth_a_bact"/>
    <property type="match status" value="1"/>
</dbReference>
<dbReference type="InterPro" id="IPR045082">
    <property type="entry name" value="ATP_syn_F0_a_bact/chloroplast"/>
</dbReference>
<dbReference type="InterPro" id="IPR000568">
    <property type="entry name" value="ATP_synth_F0_asu"/>
</dbReference>
<dbReference type="InterPro" id="IPR023011">
    <property type="entry name" value="ATP_synth_F0_asu_AS"/>
</dbReference>
<dbReference type="InterPro" id="IPR035908">
    <property type="entry name" value="F0_ATP_A_sf"/>
</dbReference>
<dbReference type="NCBIfam" id="TIGR01131">
    <property type="entry name" value="ATP_synt_6_or_A"/>
    <property type="match status" value="1"/>
</dbReference>
<dbReference type="NCBIfam" id="NF004481">
    <property type="entry name" value="PRK05815.2-3"/>
    <property type="match status" value="1"/>
</dbReference>
<dbReference type="PANTHER" id="PTHR42823">
    <property type="entry name" value="ATP SYNTHASE SUBUNIT A, CHLOROPLASTIC"/>
    <property type="match status" value="1"/>
</dbReference>
<dbReference type="PANTHER" id="PTHR42823:SF3">
    <property type="entry name" value="ATP SYNTHASE SUBUNIT A, CHLOROPLASTIC"/>
    <property type="match status" value="1"/>
</dbReference>
<dbReference type="Pfam" id="PF00119">
    <property type="entry name" value="ATP-synt_A"/>
    <property type="match status" value="1"/>
</dbReference>
<dbReference type="PRINTS" id="PR00123">
    <property type="entry name" value="ATPASEA"/>
</dbReference>
<dbReference type="SUPFAM" id="SSF81336">
    <property type="entry name" value="F1F0 ATP synthase subunit A"/>
    <property type="match status" value="1"/>
</dbReference>
<dbReference type="PROSITE" id="PS00449">
    <property type="entry name" value="ATPASE_A"/>
    <property type="match status" value="1"/>
</dbReference>
<protein>
    <recommendedName>
        <fullName evidence="1">ATP synthase subunit a</fullName>
    </recommendedName>
    <alternativeName>
        <fullName evidence="1">ATP synthase F0 sector subunit a</fullName>
    </alternativeName>
    <alternativeName>
        <fullName evidence="1">F-ATPase subunit 6</fullName>
    </alternativeName>
</protein>
<proteinExistence type="inferred from homology"/>
<sequence>MEHRVFTVANFFSSNHDFITGFFVVLTAVLMFLISLGASRKMQMVPMGLQNVYESIISAILSVAKDIIGEELARKYFPLAGTIALYVFFSNMIGIIPSFESPTASWSFTLVLALIVFFYYHFEGIRVQGFFKYFAHFAGPVKWLAPFMFPIEIISHFSRIVSLSFRLFGNIKGDDMFLLIMLLLVPWVIPVAPFMVLFFMGILQAFVFMILTYVYLAGAVLTDEGH</sequence>
<accession>Q17WM4</accession>
<comment type="function">
    <text evidence="1">Key component of the proton channel; it plays a direct role in the translocation of protons across the membrane.</text>
</comment>
<comment type="subunit">
    <text evidence="1">F-type ATPases have 2 components, CF(1) - the catalytic core - and CF(0) - the membrane proton channel. CF(1) has five subunits: alpha(3), beta(3), gamma(1), delta(1), epsilon(1). CF(0) has three main subunits: a(1), b(2) and c(9-12). The alpha and beta chains form an alternating ring which encloses part of the gamma chain. CF(1) is attached to CF(0) by a central stalk formed by the gamma and epsilon chains, while a peripheral stalk is formed by the delta and b chains.</text>
</comment>
<comment type="subcellular location">
    <subcellularLocation>
        <location evidence="1">Cell inner membrane</location>
        <topology evidence="1">Multi-pass membrane protein</topology>
    </subcellularLocation>
</comment>
<comment type="similarity">
    <text evidence="1">Belongs to the ATPase A chain family.</text>
</comment>
<reference key="1">
    <citation type="journal article" date="2006" name="PLoS Genet.">
        <title>Who ate whom? Adaptive Helicobacter genomic changes that accompanied a host jump from early humans to large felines.</title>
        <authorList>
            <person name="Eppinger M."/>
            <person name="Baar C."/>
            <person name="Linz B."/>
            <person name="Raddatz G."/>
            <person name="Lanz C."/>
            <person name="Keller H."/>
            <person name="Morelli G."/>
            <person name="Gressmann H."/>
            <person name="Achtman M."/>
            <person name="Schuster S.C."/>
        </authorList>
    </citation>
    <scope>NUCLEOTIDE SEQUENCE [LARGE SCALE GENOMIC DNA]</scope>
    <source>
        <strain>Sheeba</strain>
    </source>
</reference>
<gene>
    <name evidence="1" type="primary">atpB</name>
    <name type="ordered locus">Hac_1196</name>
</gene>